<accession>A8AGY9</accession>
<comment type="function">
    <text evidence="1">Trans-acting protein required for termination of DNA replication. Binds to DNA replication terminator sequences (terA to terF) to prevent the passage of replication forks. The termination efficiency will be affected by the affinity of this protein for the terminator sequence.</text>
</comment>
<comment type="subcellular location">
    <subcellularLocation>
        <location evidence="1">Cytoplasm</location>
    </subcellularLocation>
</comment>
<comment type="similarity">
    <text evidence="1">Belongs to the Tus family.</text>
</comment>
<reference key="1">
    <citation type="submission" date="2007-08" db="EMBL/GenBank/DDBJ databases">
        <authorList>
            <consortium name="The Citrobacter koseri Genome Sequencing Project"/>
            <person name="McClelland M."/>
            <person name="Sanderson E.K."/>
            <person name="Porwollik S."/>
            <person name="Spieth J."/>
            <person name="Clifton W.S."/>
            <person name="Latreille P."/>
            <person name="Courtney L."/>
            <person name="Wang C."/>
            <person name="Pepin K."/>
            <person name="Bhonagiri V."/>
            <person name="Nash W."/>
            <person name="Johnson M."/>
            <person name="Thiruvilangam P."/>
            <person name="Wilson R."/>
        </authorList>
    </citation>
    <scope>NUCLEOTIDE SEQUENCE [LARGE SCALE GENOMIC DNA]</scope>
    <source>
        <strain>ATCC BAA-895 / CDC 4225-83 / SGSC4696</strain>
    </source>
</reference>
<organism>
    <name type="scientific">Citrobacter koseri (strain ATCC BAA-895 / CDC 4225-83 / SGSC4696)</name>
    <dbReference type="NCBI Taxonomy" id="290338"/>
    <lineage>
        <taxon>Bacteria</taxon>
        <taxon>Pseudomonadati</taxon>
        <taxon>Pseudomonadota</taxon>
        <taxon>Gammaproteobacteria</taxon>
        <taxon>Enterobacterales</taxon>
        <taxon>Enterobacteriaceae</taxon>
        <taxon>Citrobacter</taxon>
    </lineage>
</organism>
<name>TUS_CITK8</name>
<keyword id="KW-0963">Cytoplasm</keyword>
<keyword id="KW-0235">DNA replication</keyword>
<keyword id="KW-0238">DNA-binding</keyword>
<keyword id="KW-1185">Reference proteome</keyword>
<dbReference type="EMBL" id="CP000822">
    <property type="protein sequence ID" value="ABV12752.1"/>
    <property type="molecule type" value="Genomic_DNA"/>
</dbReference>
<dbReference type="RefSeq" id="WP_012132493.1">
    <property type="nucleotide sequence ID" value="NC_009792.1"/>
</dbReference>
<dbReference type="SMR" id="A8AGY9"/>
<dbReference type="STRING" id="290338.CKO_01620"/>
<dbReference type="GeneID" id="45135668"/>
<dbReference type="KEGG" id="cko:CKO_01620"/>
<dbReference type="HOGENOM" id="CLU_078181_0_0_6"/>
<dbReference type="OrthoDB" id="6298545at2"/>
<dbReference type="Proteomes" id="UP000008148">
    <property type="component" value="Chromosome"/>
</dbReference>
<dbReference type="GO" id="GO:0005737">
    <property type="term" value="C:cytoplasm"/>
    <property type="evidence" value="ECO:0007669"/>
    <property type="project" value="UniProtKB-SubCell"/>
</dbReference>
<dbReference type="GO" id="GO:0003677">
    <property type="term" value="F:DNA binding"/>
    <property type="evidence" value="ECO:0007669"/>
    <property type="project" value="UniProtKB-UniRule"/>
</dbReference>
<dbReference type="GO" id="GO:0006274">
    <property type="term" value="P:DNA replication termination"/>
    <property type="evidence" value="ECO:0007669"/>
    <property type="project" value="UniProtKB-UniRule"/>
</dbReference>
<dbReference type="Gene3D" id="3.30.54.10">
    <property type="match status" value="1"/>
</dbReference>
<dbReference type="Gene3D" id="3.50.14.10">
    <property type="entry name" value="Replication terminator Tus, domain 1 superfamily/Replication terminator Tus"/>
    <property type="match status" value="1"/>
</dbReference>
<dbReference type="HAMAP" id="MF_00483">
    <property type="entry name" value="Rep_term_Tus"/>
    <property type="match status" value="1"/>
</dbReference>
<dbReference type="InterPro" id="IPR008865">
    <property type="entry name" value="DNA_replication_term_site-bd"/>
</dbReference>
<dbReference type="InterPro" id="IPR036381">
    <property type="entry name" value="Tus_dom1"/>
</dbReference>
<dbReference type="InterPro" id="IPR036384">
    <property type="entry name" value="Tus_sf"/>
</dbReference>
<dbReference type="NCBIfam" id="TIGR02648">
    <property type="entry name" value="rep_term_tus"/>
    <property type="match status" value="1"/>
</dbReference>
<dbReference type="Pfam" id="PF05472">
    <property type="entry name" value="Ter"/>
    <property type="match status" value="1"/>
</dbReference>
<dbReference type="SUPFAM" id="SSF56596">
    <property type="entry name" value="Replication terminator protein (Tus)"/>
    <property type="match status" value="1"/>
</dbReference>
<gene>
    <name evidence="1" type="primary">tus</name>
    <name type="ordered locus">CKO_01620</name>
</gene>
<feature type="chain" id="PRO_1000014329" description="DNA replication terminus site-binding protein">
    <location>
        <begin position="1"/>
        <end position="309"/>
    </location>
</feature>
<sequence length="309" mass="35544">MARYDLVERLNGTFRQTEHALATLTENLEQQPLLIARVFSLPEVTKEAEHNPLATIAVEQHLGKEAESLALRHYRHLFIQQQSENRSSKAAVRLPGVLCYQVDDATQAALENQIQHINQLKTTFERIVTVESGLPSAARFEWVHRHLPGLITLNAYRALTVIKNPATLRFGWANKHIIKNLRRDEVLAQLEKSLNTPRSVHPWTREEWQARLEREYQDIAALPQQARLKIKRPVKVQPIARVWYKGQQKQVQHACPTPLIALINTDKGMTVPDIGELLNYDADNVQHRFKPQAQPLRLIIPRLHLYVAD</sequence>
<evidence type="ECO:0000255" key="1">
    <source>
        <dbReference type="HAMAP-Rule" id="MF_00483"/>
    </source>
</evidence>
<proteinExistence type="inferred from homology"/>
<protein>
    <recommendedName>
        <fullName evidence="1">DNA replication terminus site-binding protein</fullName>
        <shortName evidence="1">Ter-binding protein</shortName>
    </recommendedName>
</protein>